<feature type="chain" id="PRO_0000266372" description="Guanylate kinase">
    <location>
        <begin position="1"/>
        <end position="206"/>
    </location>
</feature>
<feature type="domain" description="Guanylate kinase-like" evidence="1">
    <location>
        <begin position="6"/>
        <end position="184"/>
    </location>
</feature>
<feature type="binding site" evidence="1">
    <location>
        <begin position="13"/>
        <end position="20"/>
    </location>
    <ligand>
        <name>ATP</name>
        <dbReference type="ChEBI" id="CHEBI:30616"/>
    </ligand>
</feature>
<keyword id="KW-0067">ATP-binding</keyword>
<keyword id="KW-0963">Cytoplasm</keyword>
<keyword id="KW-0418">Kinase</keyword>
<keyword id="KW-0547">Nucleotide-binding</keyword>
<keyword id="KW-0808">Transferase</keyword>
<reference key="1">
    <citation type="journal article" date="2009" name="Genome Biol.">
        <title>Genomic and genetic analyses of diversity and plant interactions of Pseudomonas fluorescens.</title>
        <authorList>
            <person name="Silby M.W."/>
            <person name="Cerdeno-Tarraga A.M."/>
            <person name="Vernikos G.S."/>
            <person name="Giddens S.R."/>
            <person name="Jackson R.W."/>
            <person name="Preston G.M."/>
            <person name="Zhang X.-X."/>
            <person name="Moon C.D."/>
            <person name="Gehrig S.M."/>
            <person name="Godfrey S.A.C."/>
            <person name="Knight C.G."/>
            <person name="Malone J.G."/>
            <person name="Robinson Z."/>
            <person name="Spiers A.J."/>
            <person name="Harris S."/>
            <person name="Challis G.L."/>
            <person name="Yaxley A.M."/>
            <person name="Harris D."/>
            <person name="Seeger K."/>
            <person name="Murphy L."/>
            <person name="Rutter S."/>
            <person name="Squares R."/>
            <person name="Quail M.A."/>
            <person name="Saunders E."/>
            <person name="Mavromatis K."/>
            <person name="Brettin T.S."/>
            <person name="Bentley S.D."/>
            <person name="Hothersall J."/>
            <person name="Stephens E."/>
            <person name="Thomas C.M."/>
            <person name="Parkhill J."/>
            <person name="Levy S.B."/>
            <person name="Rainey P.B."/>
            <person name="Thomson N.R."/>
        </authorList>
    </citation>
    <scope>NUCLEOTIDE SEQUENCE [LARGE SCALE GENOMIC DNA]</scope>
    <source>
        <strain>Pf0-1</strain>
    </source>
</reference>
<gene>
    <name evidence="1" type="primary">gmk</name>
    <name type="ordered locus">Pfl01_5549</name>
</gene>
<evidence type="ECO:0000255" key="1">
    <source>
        <dbReference type="HAMAP-Rule" id="MF_00328"/>
    </source>
</evidence>
<sequence>MTHSTGTLYIISAPSGAGKSSLVKALTDTNPDIRVSISHTTRAMRPGEVDGVNYHFVTREEFVKMGEHGDFLERAEVFGNFYGTSQSRLQQTLDEGHDLILEIDWQGAEQVRKLMPQARSIFILPPSLQALHQRLTNRGQDSDEIIDGRMREAVSEMSHYVEYDYLIINDDFAHALDDLKAIFRANQLQQKRQQVRFGKLLAELLG</sequence>
<protein>
    <recommendedName>
        <fullName evidence="1">Guanylate kinase</fullName>
        <ecNumber evidence="1">2.7.4.8</ecNumber>
    </recommendedName>
    <alternativeName>
        <fullName evidence="1">GMP kinase</fullName>
    </alternativeName>
</protein>
<name>KGUA_PSEPF</name>
<dbReference type="EC" id="2.7.4.8" evidence="1"/>
<dbReference type="EMBL" id="CP000094">
    <property type="protein sequence ID" value="ABA77286.1"/>
    <property type="molecule type" value="Genomic_DNA"/>
</dbReference>
<dbReference type="RefSeq" id="WP_011336561.1">
    <property type="nucleotide sequence ID" value="NC_007492.2"/>
</dbReference>
<dbReference type="SMR" id="Q3K4L8"/>
<dbReference type="KEGG" id="pfo:Pfl01_5549"/>
<dbReference type="eggNOG" id="COG0194">
    <property type="taxonomic scope" value="Bacteria"/>
</dbReference>
<dbReference type="HOGENOM" id="CLU_001715_1_0_6"/>
<dbReference type="Proteomes" id="UP000002704">
    <property type="component" value="Chromosome"/>
</dbReference>
<dbReference type="GO" id="GO:0005829">
    <property type="term" value="C:cytosol"/>
    <property type="evidence" value="ECO:0007669"/>
    <property type="project" value="TreeGrafter"/>
</dbReference>
<dbReference type="GO" id="GO:0005524">
    <property type="term" value="F:ATP binding"/>
    <property type="evidence" value="ECO:0007669"/>
    <property type="project" value="UniProtKB-UniRule"/>
</dbReference>
<dbReference type="GO" id="GO:0004385">
    <property type="term" value="F:guanylate kinase activity"/>
    <property type="evidence" value="ECO:0007669"/>
    <property type="project" value="UniProtKB-UniRule"/>
</dbReference>
<dbReference type="CDD" id="cd00071">
    <property type="entry name" value="GMPK"/>
    <property type="match status" value="1"/>
</dbReference>
<dbReference type="FunFam" id="3.40.50.300:FF:000084">
    <property type="entry name" value="Guanylate kinase"/>
    <property type="match status" value="1"/>
</dbReference>
<dbReference type="FunFam" id="3.30.63.10:FF:000002">
    <property type="entry name" value="Guanylate kinase 1"/>
    <property type="match status" value="1"/>
</dbReference>
<dbReference type="Gene3D" id="3.30.63.10">
    <property type="entry name" value="Guanylate Kinase phosphate binding domain"/>
    <property type="match status" value="1"/>
</dbReference>
<dbReference type="Gene3D" id="3.40.50.300">
    <property type="entry name" value="P-loop containing nucleotide triphosphate hydrolases"/>
    <property type="match status" value="1"/>
</dbReference>
<dbReference type="HAMAP" id="MF_00328">
    <property type="entry name" value="Guanylate_kinase"/>
    <property type="match status" value="1"/>
</dbReference>
<dbReference type="InterPro" id="IPR008145">
    <property type="entry name" value="GK/Ca_channel_bsu"/>
</dbReference>
<dbReference type="InterPro" id="IPR008144">
    <property type="entry name" value="Guanylate_kin-like_dom"/>
</dbReference>
<dbReference type="InterPro" id="IPR017665">
    <property type="entry name" value="Guanylate_kinase"/>
</dbReference>
<dbReference type="InterPro" id="IPR020590">
    <property type="entry name" value="Guanylate_kinase_CS"/>
</dbReference>
<dbReference type="InterPro" id="IPR027417">
    <property type="entry name" value="P-loop_NTPase"/>
</dbReference>
<dbReference type="NCBIfam" id="TIGR03263">
    <property type="entry name" value="guanyl_kin"/>
    <property type="match status" value="1"/>
</dbReference>
<dbReference type="PANTHER" id="PTHR23117:SF13">
    <property type="entry name" value="GUANYLATE KINASE"/>
    <property type="match status" value="1"/>
</dbReference>
<dbReference type="PANTHER" id="PTHR23117">
    <property type="entry name" value="GUANYLATE KINASE-RELATED"/>
    <property type="match status" value="1"/>
</dbReference>
<dbReference type="Pfam" id="PF00625">
    <property type="entry name" value="Guanylate_kin"/>
    <property type="match status" value="1"/>
</dbReference>
<dbReference type="SMART" id="SM00072">
    <property type="entry name" value="GuKc"/>
    <property type="match status" value="1"/>
</dbReference>
<dbReference type="SUPFAM" id="SSF52540">
    <property type="entry name" value="P-loop containing nucleoside triphosphate hydrolases"/>
    <property type="match status" value="1"/>
</dbReference>
<dbReference type="PROSITE" id="PS00856">
    <property type="entry name" value="GUANYLATE_KINASE_1"/>
    <property type="match status" value="1"/>
</dbReference>
<dbReference type="PROSITE" id="PS50052">
    <property type="entry name" value="GUANYLATE_KINASE_2"/>
    <property type="match status" value="1"/>
</dbReference>
<organism>
    <name type="scientific">Pseudomonas fluorescens (strain Pf0-1)</name>
    <dbReference type="NCBI Taxonomy" id="205922"/>
    <lineage>
        <taxon>Bacteria</taxon>
        <taxon>Pseudomonadati</taxon>
        <taxon>Pseudomonadota</taxon>
        <taxon>Gammaproteobacteria</taxon>
        <taxon>Pseudomonadales</taxon>
        <taxon>Pseudomonadaceae</taxon>
        <taxon>Pseudomonas</taxon>
    </lineage>
</organism>
<comment type="function">
    <text evidence="1">Essential for recycling GMP and indirectly, cGMP.</text>
</comment>
<comment type="catalytic activity">
    <reaction evidence="1">
        <text>GMP + ATP = GDP + ADP</text>
        <dbReference type="Rhea" id="RHEA:20780"/>
        <dbReference type="ChEBI" id="CHEBI:30616"/>
        <dbReference type="ChEBI" id="CHEBI:58115"/>
        <dbReference type="ChEBI" id="CHEBI:58189"/>
        <dbReference type="ChEBI" id="CHEBI:456216"/>
        <dbReference type="EC" id="2.7.4.8"/>
    </reaction>
</comment>
<comment type="subcellular location">
    <subcellularLocation>
        <location evidence="1">Cytoplasm</location>
    </subcellularLocation>
</comment>
<comment type="similarity">
    <text evidence="1">Belongs to the guanylate kinase family.</text>
</comment>
<proteinExistence type="inferred from homology"/>
<accession>Q3K4L8</accession>